<feature type="chain" id="PRO_1000081546" description="Small ribosomal subunit protein uS10">
    <location>
        <begin position="1"/>
        <end position="110"/>
    </location>
</feature>
<evidence type="ECO:0000255" key="1">
    <source>
        <dbReference type="HAMAP-Rule" id="MF_00508"/>
    </source>
</evidence>
<evidence type="ECO:0000305" key="2"/>
<proteinExistence type="inferred from homology"/>
<dbReference type="EMBL" id="CP000890">
    <property type="protein sequence ID" value="ABX78460.1"/>
    <property type="molecule type" value="Genomic_DNA"/>
</dbReference>
<dbReference type="RefSeq" id="WP_005771548.1">
    <property type="nucleotide sequence ID" value="NC_010117.1"/>
</dbReference>
<dbReference type="SMR" id="A9NAM3"/>
<dbReference type="KEGG" id="cbs:COXBURSA331_A0336"/>
<dbReference type="HOGENOM" id="CLU_122625_1_3_6"/>
<dbReference type="GO" id="GO:1990904">
    <property type="term" value="C:ribonucleoprotein complex"/>
    <property type="evidence" value="ECO:0007669"/>
    <property type="project" value="UniProtKB-KW"/>
</dbReference>
<dbReference type="GO" id="GO:0005840">
    <property type="term" value="C:ribosome"/>
    <property type="evidence" value="ECO:0007669"/>
    <property type="project" value="UniProtKB-KW"/>
</dbReference>
<dbReference type="GO" id="GO:0003735">
    <property type="term" value="F:structural constituent of ribosome"/>
    <property type="evidence" value="ECO:0007669"/>
    <property type="project" value="InterPro"/>
</dbReference>
<dbReference type="GO" id="GO:0000049">
    <property type="term" value="F:tRNA binding"/>
    <property type="evidence" value="ECO:0007669"/>
    <property type="project" value="UniProtKB-UniRule"/>
</dbReference>
<dbReference type="GO" id="GO:0006412">
    <property type="term" value="P:translation"/>
    <property type="evidence" value="ECO:0007669"/>
    <property type="project" value="UniProtKB-UniRule"/>
</dbReference>
<dbReference type="FunFam" id="3.30.70.600:FF:000001">
    <property type="entry name" value="30S ribosomal protein S10"/>
    <property type="match status" value="1"/>
</dbReference>
<dbReference type="Gene3D" id="3.30.70.600">
    <property type="entry name" value="Ribosomal protein S10 domain"/>
    <property type="match status" value="1"/>
</dbReference>
<dbReference type="HAMAP" id="MF_00508">
    <property type="entry name" value="Ribosomal_uS10"/>
    <property type="match status" value="1"/>
</dbReference>
<dbReference type="InterPro" id="IPR001848">
    <property type="entry name" value="Ribosomal_uS10"/>
</dbReference>
<dbReference type="InterPro" id="IPR018268">
    <property type="entry name" value="Ribosomal_uS10_CS"/>
</dbReference>
<dbReference type="InterPro" id="IPR027486">
    <property type="entry name" value="Ribosomal_uS10_dom"/>
</dbReference>
<dbReference type="InterPro" id="IPR036838">
    <property type="entry name" value="Ribosomal_uS10_dom_sf"/>
</dbReference>
<dbReference type="NCBIfam" id="NF001861">
    <property type="entry name" value="PRK00596.1"/>
    <property type="match status" value="1"/>
</dbReference>
<dbReference type="NCBIfam" id="TIGR01049">
    <property type="entry name" value="rpsJ_bact"/>
    <property type="match status" value="1"/>
</dbReference>
<dbReference type="PANTHER" id="PTHR11700">
    <property type="entry name" value="30S RIBOSOMAL PROTEIN S10 FAMILY MEMBER"/>
    <property type="match status" value="1"/>
</dbReference>
<dbReference type="Pfam" id="PF00338">
    <property type="entry name" value="Ribosomal_S10"/>
    <property type="match status" value="1"/>
</dbReference>
<dbReference type="PRINTS" id="PR00971">
    <property type="entry name" value="RIBOSOMALS10"/>
</dbReference>
<dbReference type="SMART" id="SM01403">
    <property type="entry name" value="Ribosomal_S10"/>
    <property type="match status" value="1"/>
</dbReference>
<dbReference type="SUPFAM" id="SSF54999">
    <property type="entry name" value="Ribosomal protein S10"/>
    <property type="match status" value="1"/>
</dbReference>
<dbReference type="PROSITE" id="PS00361">
    <property type="entry name" value="RIBOSOMAL_S10"/>
    <property type="match status" value="1"/>
</dbReference>
<keyword id="KW-0687">Ribonucleoprotein</keyword>
<keyword id="KW-0689">Ribosomal protein</keyword>
<accession>A9NAM3</accession>
<reference key="1">
    <citation type="submission" date="2007-11" db="EMBL/GenBank/DDBJ databases">
        <title>Genome sequencing of phylogenetically and phenotypically diverse Coxiella burnetii isolates.</title>
        <authorList>
            <person name="Seshadri R."/>
            <person name="Samuel J.E."/>
        </authorList>
    </citation>
    <scope>NUCLEOTIDE SEQUENCE [LARGE SCALE GENOMIC DNA]</scope>
    <source>
        <strain>RSA 331 / Henzerling II</strain>
    </source>
</reference>
<comment type="function">
    <text evidence="1">Involved in the binding of tRNA to the ribosomes.</text>
</comment>
<comment type="subunit">
    <text evidence="1">Part of the 30S ribosomal subunit.</text>
</comment>
<comment type="similarity">
    <text evidence="1">Belongs to the universal ribosomal protein uS10 family.</text>
</comment>
<sequence length="110" mass="12592">MSDNQRIRIRLKAFDHRLIDRSTREIVETARRTGAIIRGPILLPTKIERYTVLISPNIDKDARDQYEIRTHKRLVDISEPTDKTVDALMKLDLAAGVDVQIELLNKKSGA</sequence>
<gene>
    <name evidence="1" type="primary">rpsJ</name>
    <name type="ordered locus">COXBURSA331_A0336</name>
</gene>
<name>RS10_COXBR</name>
<protein>
    <recommendedName>
        <fullName evidence="1">Small ribosomal subunit protein uS10</fullName>
    </recommendedName>
    <alternativeName>
        <fullName evidence="2">30S ribosomal protein S10</fullName>
    </alternativeName>
</protein>
<organism>
    <name type="scientific">Coxiella burnetii (strain RSA 331 / Henzerling II)</name>
    <dbReference type="NCBI Taxonomy" id="360115"/>
    <lineage>
        <taxon>Bacteria</taxon>
        <taxon>Pseudomonadati</taxon>
        <taxon>Pseudomonadota</taxon>
        <taxon>Gammaproteobacteria</taxon>
        <taxon>Legionellales</taxon>
        <taxon>Coxiellaceae</taxon>
        <taxon>Coxiella</taxon>
    </lineage>
</organism>